<accession>P08833</accession>
<accession>A4D2F4</accession>
<accession>D3DVL9</accession>
<accession>Q8IYP5</accession>
<feature type="signal peptide" evidence="8 9 11">
    <location>
        <begin position="1"/>
        <end position="25"/>
    </location>
</feature>
<feature type="chain" id="PRO_0000014365" description="Insulin-like growth factor-binding protein 1">
    <location>
        <begin position="26"/>
        <end position="259"/>
    </location>
</feature>
<feature type="domain" description="IGFBP N-terminal" evidence="3">
    <location>
        <begin position="26"/>
        <end position="107"/>
    </location>
</feature>
<feature type="domain" description="Thyroglobulin type-1" evidence="2">
    <location>
        <begin position="173"/>
        <end position="251"/>
    </location>
</feature>
<feature type="short sequence motif" description="Cell attachment site" evidence="14">
    <location>
        <begin position="246"/>
        <end position="248"/>
    </location>
</feature>
<feature type="modified residue" description="Phosphoserine; by FAM20C" evidence="10">
    <location>
        <position position="45"/>
    </location>
</feature>
<feature type="modified residue" description="Phosphoserine" evidence="8">
    <location>
        <position position="120"/>
    </location>
</feature>
<feature type="modified residue" description="Phosphoserine" evidence="8">
    <location>
        <position position="123"/>
    </location>
</feature>
<feature type="modified residue" description="Phosphoserine" evidence="8 15">
    <location>
        <position position="126"/>
    </location>
</feature>
<feature type="modified residue" description="Phosphoserine" evidence="8 15 19">
    <location>
        <position position="144"/>
    </location>
</feature>
<feature type="modified residue" description="Phosphoserine; by FAM20C" evidence="10">
    <location>
        <position position="156"/>
    </location>
</feature>
<feature type="modified residue" description="Phosphothreonine; by FAM20C" evidence="10">
    <location>
        <position position="157"/>
    </location>
</feature>
<feature type="modified residue" description="Phosphotyrosine" evidence="10">
    <location>
        <position position="158"/>
    </location>
</feature>
<feature type="modified residue" description="Phosphothreonine; by FAM20C" evidence="10">
    <location>
        <position position="193"/>
    </location>
</feature>
<feature type="modified residue" description="Phosphoserine; by FAM20C" evidence="8 10 15">
    <location>
        <position position="194"/>
    </location>
</feature>
<feature type="modified residue" description="Phosphoserine; by FAM20C" evidence="10">
    <location>
        <position position="199"/>
    </location>
</feature>
<feature type="modified residue" description="Phosphoserine; by FAM20C" evidence="10">
    <location>
        <position position="242"/>
    </location>
</feature>
<feature type="disulfide bond" evidence="3">
    <location>
        <begin position="30"/>
        <end position="57"/>
    </location>
</feature>
<feature type="disulfide bond" evidence="3">
    <location>
        <begin position="33"/>
        <end position="59"/>
    </location>
</feature>
<feature type="disulfide bond" evidence="3">
    <location>
        <begin position="41"/>
        <end position="60"/>
    </location>
</feature>
<feature type="disulfide bond" evidence="3">
    <location>
        <begin position="48"/>
        <end position="63"/>
    </location>
</feature>
<feature type="disulfide bond" evidence="3">
    <location>
        <begin position="71"/>
        <end position="84"/>
    </location>
</feature>
<feature type="disulfide bond" evidence="3">
    <location>
        <begin position="78"/>
        <end position="104"/>
    </location>
</feature>
<feature type="disulfide bond">
    <location>
        <begin position="176"/>
        <end position="206"/>
    </location>
</feature>
<feature type="disulfide bond">
    <location>
        <begin position="217"/>
        <end position="228"/>
    </location>
</feature>
<feature type="disulfide bond">
    <location>
        <begin position="230"/>
        <end position="251"/>
    </location>
</feature>
<feature type="sequence variant" id="VAR_049564" description="In dbSNP:rs41258845.">
    <original>H</original>
    <variation>D</variation>
    <location>
        <position position="114"/>
    </location>
</feature>
<feature type="sequence variant" id="VAR_011905" description="In dbSNP:rs1065782." evidence="17">
    <original>V</original>
    <variation>I</variation>
    <location>
        <position position="183"/>
    </location>
</feature>
<feature type="sequence variant" id="VAR_003821" description="In dbSNP:rs4619." evidence="5 17">
    <original>I</original>
    <variation>M</variation>
    <location>
        <position position="253"/>
    </location>
</feature>
<feature type="mutagenesis site" description="Loss of binding to ITGA5." evidence="14">
    <original>R</original>
    <variation>W</variation>
    <location>
        <position position="246"/>
    </location>
</feature>
<feature type="sequence conflict" description="In Ref. 2; AAA52540." evidence="18" ref="2">
    <original>H</original>
    <variation>Q</variation>
    <location>
        <position position="213"/>
    </location>
</feature>
<feature type="helix" evidence="20">
    <location>
        <begin position="175"/>
        <end position="193"/>
    </location>
</feature>
<feature type="strand" evidence="20">
    <location>
        <begin position="199"/>
        <end position="201"/>
    </location>
</feature>
<feature type="strand" evidence="20">
    <location>
        <begin position="210"/>
        <end position="212"/>
    </location>
</feature>
<feature type="strand" evidence="20">
    <location>
        <begin position="214"/>
        <end position="217"/>
    </location>
</feature>
<feature type="strand" evidence="20">
    <location>
        <begin position="222"/>
        <end position="224"/>
    </location>
</feature>
<feature type="strand" evidence="20">
    <location>
        <begin position="228"/>
        <end position="231"/>
    </location>
</feature>
<feature type="turn" evidence="20">
    <location>
        <begin position="233"/>
        <end position="235"/>
    </location>
</feature>
<feature type="strand" evidence="20">
    <location>
        <begin position="245"/>
        <end position="247"/>
    </location>
</feature>
<sequence>MSEVPVARVWLVLLLLTVQVGVTAGAPWQCAPCSAEKLALCPPVSASCSEVTRSAGCGCCPMCALPLGAACGVATARCARGLSCRALPGEQQPLHALTRGQGACVQESDASAPHAAEAGSPESPESTEITEEELLDNFHLMAPSEEDHSILWDAISTYDGSKALHVTNIKKWKEPCRIELYRVVESLAKAQETSGEEISKFYLPNCNKNGFYHSRQCETSMDGEAGLCWCVYPWNGKRIPGSPEIRGDPNCQIYFNVQN</sequence>
<evidence type="ECO:0000250" key="1">
    <source>
        <dbReference type="UniProtKB" id="P21743"/>
    </source>
</evidence>
<evidence type="ECO:0000255" key="2">
    <source>
        <dbReference type="PROSITE-ProRule" id="PRU00500"/>
    </source>
</evidence>
<evidence type="ECO:0000255" key="3">
    <source>
        <dbReference type="PROSITE-ProRule" id="PRU00653"/>
    </source>
</evidence>
<evidence type="ECO:0000269" key="4">
    <source>
    </source>
</evidence>
<evidence type="ECO:0000269" key="5">
    <source>
    </source>
</evidence>
<evidence type="ECO:0000269" key="6">
    <source>
    </source>
</evidence>
<evidence type="ECO:0000269" key="7">
    <source>
    </source>
</evidence>
<evidence type="ECO:0000269" key="8">
    <source>
    </source>
</evidence>
<evidence type="ECO:0000269" key="9">
    <source>
    </source>
</evidence>
<evidence type="ECO:0000269" key="10">
    <source>
    </source>
</evidence>
<evidence type="ECO:0000269" key="11">
    <source>
    </source>
</evidence>
<evidence type="ECO:0000269" key="12">
    <source>
    </source>
</evidence>
<evidence type="ECO:0000269" key="13">
    <source>
    </source>
</evidence>
<evidence type="ECO:0000269" key="14">
    <source>
    </source>
</evidence>
<evidence type="ECO:0000269" key="15">
    <source>
    </source>
</evidence>
<evidence type="ECO:0000269" key="16">
    <source>
    </source>
</evidence>
<evidence type="ECO:0000269" key="17">
    <source ref="10"/>
</evidence>
<evidence type="ECO:0000305" key="18"/>
<evidence type="ECO:0007744" key="19">
    <source>
    </source>
</evidence>
<evidence type="ECO:0007829" key="20">
    <source>
        <dbReference type="PDB" id="1ZT3"/>
    </source>
</evidence>
<keyword id="KW-0002">3D-structure</keyword>
<keyword id="KW-0903">Direct protein sequencing</keyword>
<keyword id="KW-1015">Disulfide bond</keyword>
<keyword id="KW-0340">Growth factor binding</keyword>
<keyword id="KW-0597">Phosphoprotein</keyword>
<keyword id="KW-1267">Proteomics identification</keyword>
<keyword id="KW-1185">Reference proteome</keyword>
<keyword id="KW-0964">Secreted</keyword>
<keyword id="KW-0732">Signal</keyword>
<dbReference type="EMBL" id="Y00856">
    <property type="protein sequence ID" value="CAA68770.1"/>
    <property type="molecule type" value="mRNA"/>
</dbReference>
<dbReference type="EMBL" id="M20841">
    <property type="protein sequence ID" value="AAA52540.1"/>
    <property type="status" value="ALT_FRAME"/>
    <property type="molecule type" value="mRNA"/>
</dbReference>
<dbReference type="EMBL" id="X12385">
    <property type="protein sequence ID" value="CAA30942.1"/>
    <property type="molecule type" value="mRNA"/>
</dbReference>
<dbReference type="EMBL" id="X13405">
    <property type="protein sequence ID" value="CAA31771.1"/>
    <property type="molecule type" value="mRNA"/>
</dbReference>
<dbReference type="EMBL" id="M31145">
    <property type="protein sequence ID" value="AAA52542.1"/>
    <property type="molecule type" value="mRNA"/>
</dbReference>
<dbReference type="EMBL" id="M59316">
    <property type="protein sequence ID" value="AAA52783.1"/>
    <property type="molecule type" value="Genomic_DNA"/>
</dbReference>
<dbReference type="EMBL" id="M23595">
    <property type="protein sequence ID" value="AAA52785.1"/>
    <property type="molecule type" value="Genomic_DNA"/>
</dbReference>
<dbReference type="EMBL" id="M23592">
    <property type="protein sequence ID" value="AAA52785.1"/>
    <property type="status" value="JOINED"/>
    <property type="molecule type" value="Genomic_DNA"/>
</dbReference>
<dbReference type="EMBL" id="M23593">
    <property type="protein sequence ID" value="AAA52785.1"/>
    <property type="status" value="JOINED"/>
    <property type="molecule type" value="Genomic_DNA"/>
</dbReference>
<dbReference type="EMBL" id="M23594">
    <property type="protein sequence ID" value="AAA52785.1"/>
    <property type="status" value="JOINED"/>
    <property type="molecule type" value="Genomic_DNA"/>
</dbReference>
<dbReference type="EMBL" id="M74587">
    <property type="protein sequence ID" value="AAA52784.1"/>
    <property type="molecule type" value="Genomic_DNA"/>
</dbReference>
<dbReference type="EMBL" id="BT019685">
    <property type="protein sequence ID" value="AAV38491.1"/>
    <property type="molecule type" value="mRNA"/>
</dbReference>
<dbReference type="EMBL" id="AY434089">
    <property type="protein sequence ID" value="AAQ96599.1"/>
    <property type="molecule type" value="Genomic_DNA"/>
</dbReference>
<dbReference type="EMBL" id="CH236958">
    <property type="protein sequence ID" value="EAL23800.1"/>
    <property type="molecule type" value="Genomic_DNA"/>
</dbReference>
<dbReference type="EMBL" id="CH471128">
    <property type="protein sequence ID" value="EAW61030.1"/>
    <property type="molecule type" value="Genomic_DNA"/>
</dbReference>
<dbReference type="EMBL" id="CH471128">
    <property type="protein sequence ID" value="EAW61031.1"/>
    <property type="molecule type" value="Genomic_DNA"/>
</dbReference>
<dbReference type="EMBL" id="BC035263">
    <property type="protein sequence ID" value="AAH35263.2"/>
    <property type="molecule type" value="mRNA"/>
</dbReference>
<dbReference type="EMBL" id="X15002">
    <property type="protein sequence ID" value="CAA33110.1"/>
    <property type="molecule type" value="mRNA"/>
</dbReference>
<dbReference type="CCDS" id="CCDS5504.1"/>
<dbReference type="PIR" id="A31867">
    <property type="entry name" value="IOHU1"/>
</dbReference>
<dbReference type="RefSeq" id="NP_000587.1">
    <property type="nucleotide sequence ID" value="NM_000596.4"/>
</dbReference>
<dbReference type="PDB" id="1ZT3">
    <property type="method" value="X-ray"/>
    <property type="resolution" value="1.80 A"/>
    <property type="chains" value="A=172-251"/>
</dbReference>
<dbReference type="PDB" id="1ZT5">
    <property type="method" value="X-ray"/>
    <property type="resolution" value="1.82 A"/>
    <property type="chains" value="A=172-251"/>
</dbReference>
<dbReference type="PDB" id="2DSQ">
    <property type="method" value="X-ray"/>
    <property type="resolution" value="2.80 A"/>
    <property type="chains" value="G/H=166-259"/>
</dbReference>
<dbReference type="PDBsum" id="1ZT3"/>
<dbReference type="PDBsum" id="1ZT5"/>
<dbReference type="PDBsum" id="2DSQ"/>
<dbReference type="SMR" id="P08833"/>
<dbReference type="BioGRID" id="109705">
    <property type="interactions" value="31"/>
</dbReference>
<dbReference type="DIP" id="DIP-59846N"/>
<dbReference type="FunCoup" id="P08833">
    <property type="interactions" value="176"/>
</dbReference>
<dbReference type="IntAct" id="P08833">
    <property type="interactions" value="28"/>
</dbReference>
<dbReference type="STRING" id="9606.ENSP00000275525"/>
<dbReference type="BindingDB" id="P08833"/>
<dbReference type="ChEMBL" id="CHEMBL4178"/>
<dbReference type="DrugBank" id="DB01277">
    <property type="generic name" value="Mecasermin"/>
</dbReference>
<dbReference type="MEROPS" id="I31.951"/>
<dbReference type="iPTMnet" id="P08833"/>
<dbReference type="PhosphoSitePlus" id="P08833"/>
<dbReference type="BioMuta" id="IGFBP1"/>
<dbReference type="DMDM" id="124055"/>
<dbReference type="MassIVE" id="P08833"/>
<dbReference type="PaxDb" id="9606-ENSP00000275525"/>
<dbReference type="PeptideAtlas" id="P08833"/>
<dbReference type="ProteomicsDB" id="52167"/>
<dbReference type="Antibodypedia" id="3841">
    <property type="antibodies" value="691 antibodies from 38 providers"/>
</dbReference>
<dbReference type="DNASU" id="3484"/>
<dbReference type="Ensembl" id="ENST00000275525.8">
    <property type="protein sequence ID" value="ENSP00000275525.3"/>
    <property type="gene ID" value="ENSG00000146678.10"/>
</dbReference>
<dbReference type="GeneID" id="3484"/>
<dbReference type="KEGG" id="hsa:3484"/>
<dbReference type="MANE-Select" id="ENST00000275525.8">
    <property type="protein sequence ID" value="ENSP00000275525.3"/>
    <property type="RefSeq nucleotide sequence ID" value="NM_000596.4"/>
    <property type="RefSeq protein sequence ID" value="NP_000587.1"/>
</dbReference>
<dbReference type="UCSC" id="uc003tnp.4">
    <property type="organism name" value="human"/>
</dbReference>
<dbReference type="AGR" id="HGNC:5469"/>
<dbReference type="CTD" id="3484"/>
<dbReference type="DisGeNET" id="3484"/>
<dbReference type="GeneCards" id="IGFBP1"/>
<dbReference type="HGNC" id="HGNC:5469">
    <property type="gene designation" value="IGFBP1"/>
</dbReference>
<dbReference type="HPA" id="ENSG00000146678">
    <property type="expression patterns" value="Tissue enriched (liver)"/>
</dbReference>
<dbReference type="MIM" id="146730">
    <property type="type" value="gene"/>
</dbReference>
<dbReference type="neXtProt" id="NX_P08833"/>
<dbReference type="OpenTargets" id="ENSG00000146678"/>
<dbReference type="PharmGKB" id="PA29703"/>
<dbReference type="VEuPathDB" id="HostDB:ENSG00000146678"/>
<dbReference type="eggNOG" id="ENOG502QWRP">
    <property type="taxonomic scope" value="Eukaryota"/>
</dbReference>
<dbReference type="GeneTree" id="ENSGT00940000157394"/>
<dbReference type="HOGENOM" id="CLU_070833_3_0_1"/>
<dbReference type="InParanoid" id="P08833"/>
<dbReference type="OMA" id="TRGDPNC"/>
<dbReference type="OrthoDB" id="9926277at2759"/>
<dbReference type="PAN-GO" id="P08833">
    <property type="GO annotations" value="4 GO annotations based on evolutionary models"/>
</dbReference>
<dbReference type="PhylomeDB" id="P08833"/>
<dbReference type="TreeFam" id="TF331211"/>
<dbReference type="PathwayCommons" id="P08833"/>
<dbReference type="Reactome" id="R-HSA-380994">
    <property type="pathway name" value="ATF4 activates genes in response to endoplasmic reticulum stress"/>
</dbReference>
<dbReference type="Reactome" id="R-HSA-381426">
    <property type="pathway name" value="Regulation of Insulin-like Growth Factor (IGF) transport and uptake by Insulin-like Growth Factor Binding Proteins (IGFBPs)"/>
</dbReference>
<dbReference type="Reactome" id="R-HSA-8957275">
    <property type="pathway name" value="Post-translational protein phosphorylation"/>
</dbReference>
<dbReference type="Reactome" id="R-HSA-9615017">
    <property type="pathway name" value="FOXO-mediated transcription of oxidative stress, metabolic and neuronal genes"/>
</dbReference>
<dbReference type="SignaLink" id="P08833"/>
<dbReference type="SIGNOR" id="P08833"/>
<dbReference type="BioGRID-ORCS" id="3484">
    <property type="hits" value="15 hits in 1150 CRISPR screens"/>
</dbReference>
<dbReference type="ChiTaRS" id="IGFBP1">
    <property type="organism name" value="human"/>
</dbReference>
<dbReference type="EvolutionaryTrace" id="P08833"/>
<dbReference type="GeneWiki" id="IGFBP1"/>
<dbReference type="GenomeRNAi" id="3484"/>
<dbReference type="Pharos" id="P08833">
    <property type="development level" value="Tchem"/>
</dbReference>
<dbReference type="PRO" id="PR:P08833"/>
<dbReference type="Proteomes" id="UP000005640">
    <property type="component" value="Chromosome 7"/>
</dbReference>
<dbReference type="RNAct" id="P08833">
    <property type="molecule type" value="protein"/>
</dbReference>
<dbReference type="Bgee" id="ENSG00000146678">
    <property type="expression patterns" value="Expressed in decidua and 99 other cell types or tissues"/>
</dbReference>
<dbReference type="ExpressionAtlas" id="P08833">
    <property type="expression patterns" value="baseline and differential"/>
</dbReference>
<dbReference type="GO" id="GO:0005788">
    <property type="term" value="C:endoplasmic reticulum lumen"/>
    <property type="evidence" value="ECO:0000304"/>
    <property type="project" value="Reactome"/>
</dbReference>
<dbReference type="GO" id="GO:0005576">
    <property type="term" value="C:extracellular region"/>
    <property type="evidence" value="ECO:0000304"/>
    <property type="project" value="Reactome"/>
</dbReference>
<dbReference type="GO" id="GO:0005615">
    <property type="term" value="C:extracellular space"/>
    <property type="evidence" value="ECO:0000318"/>
    <property type="project" value="GO_Central"/>
</dbReference>
<dbReference type="GO" id="GO:0005794">
    <property type="term" value="C:Golgi apparatus"/>
    <property type="evidence" value="ECO:0000314"/>
    <property type="project" value="HPA"/>
</dbReference>
<dbReference type="GO" id="GO:0005520">
    <property type="term" value="F:insulin-like growth factor binding"/>
    <property type="evidence" value="ECO:0000304"/>
    <property type="project" value="ProtInc"/>
</dbReference>
<dbReference type="GO" id="GO:0031994">
    <property type="term" value="F:insulin-like growth factor I binding"/>
    <property type="evidence" value="ECO:0000314"/>
    <property type="project" value="UniProtKB"/>
</dbReference>
<dbReference type="GO" id="GO:0031995">
    <property type="term" value="F:insulin-like growth factor II binding"/>
    <property type="evidence" value="ECO:0000314"/>
    <property type="project" value="UniProtKB"/>
</dbReference>
<dbReference type="GO" id="GO:0005102">
    <property type="term" value="F:signaling receptor binding"/>
    <property type="evidence" value="ECO:0000304"/>
    <property type="project" value="ParkinsonsUK-UCL"/>
</dbReference>
<dbReference type="GO" id="GO:0008286">
    <property type="term" value="P:insulin receptor signaling pathway"/>
    <property type="evidence" value="ECO:0007669"/>
    <property type="project" value="Ensembl"/>
</dbReference>
<dbReference type="GO" id="GO:0090090">
    <property type="term" value="P:negative regulation of canonical Wnt signaling pathway"/>
    <property type="evidence" value="ECO:0000304"/>
    <property type="project" value="ParkinsonsUK-UCL"/>
</dbReference>
<dbReference type="GO" id="GO:0030307">
    <property type="term" value="P:positive regulation of cell growth"/>
    <property type="evidence" value="ECO:0007669"/>
    <property type="project" value="Ensembl"/>
</dbReference>
<dbReference type="GO" id="GO:0043567">
    <property type="term" value="P:regulation of insulin-like growth factor receptor signaling pathway"/>
    <property type="evidence" value="ECO:0000318"/>
    <property type="project" value="GO_Central"/>
</dbReference>
<dbReference type="GO" id="GO:0007165">
    <property type="term" value="P:signal transduction"/>
    <property type="evidence" value="ECO:0000304"/>
    <property type="project" value="ProtInc"/>
</dbReference>
<dbReference type="GO" id="GO:0042246">
    <property type="term" value="P:tissue regeneration"/>
    <property type="evidence" value="ECO:0007669"/>
    <property type="project" value="Ensembl"/>
</dbReference>
<dbReference type="CDD" id="cd00191">
    <property type="entry name" value="TY"/>
    <property type="match status" value="1"/>
</dbReference>
<dbReference type="FunFam" id="4.10.40.20:FF:000001">
    <property type="entry name" value="Insulin-like growth factor binding protein 5"/>
    <property type="match status" value="1"/>
</dbReference>
<dbReference type="FunFam" id="4.10.800.10:FF:000002">
    <property type="entry name" value="Insulin-like growth factor-binding protein 2"/>
    <property type="match status" value="1"/>
</dbReference>
<dbReference type="Gene3D" id="4.10.40.20">
    <property type="match status" value="1"/>
</dbReference>
<dbReference type="Gene3D" id="4.10.800.10">
    <property type="entry name" value="Thyroglobulin type-1"/>
    <property type="match status" value="1"/>
</dbReference>
<dbReference type="InterPro" id="IPR009030">
    <property type="entry name" value="Growth_fac_rcpt_cys_sf"/>
</dbReference>
<dbReference type="InterPro" id="IPR000867">
    <property type="entry name" value="IGFBP-like"/>
</dbReference>
<dbReference type="InterPro" id="IPR022322">
    <property type="entry name" value="IGFBP1"/>
</dbReference>
<dbReference type="InterPro" id="IPR022321">
    <property type="entry name" value="IGFBP_1-6_chordata"/>
</dbReference>
<dbReference type="InterPro" id="IPR017891">
    <property type="entry name" value="Insulin_GF-bd_Cys-rich_CS"/>
</dbReference>
<dbReference type="InterPro" id="IPR000716">
    <property type="entry name" value="Thyroglobulin_1"/>
</dbReference>
<dbReference type="InterPro" id="IPR036857">
    <property type="entry name" value="Thyroglobulin_1_sf"/>
</dbReference>
<dbReference type="PANTHER" id="PTHR11551">
    <property type="entry name" value="INSULIN-LIKE GROWTH FACTOR BINDING PROTEIN"/>
    <property type="match status" value="1"/>
</dbReference>
<dbReference type="PANTHER" id="PTHR11551:SF6">
    <property type="entry name" value="INSULIN-LIKE GROWTH FACTOR-BINDING PROTEIN 1"/>
    <property type="match status" value="1"/>
</dbReference>
<dbReference type="Pfam" id="PF00219">
    <property type="entry name" value="IGFBP"/>
    <property type="match status" value="1"/>
</dbReference>
<dbReference type="Pfam" id="PF00086">
    <property type="entry name" value="Thyroglobulin_1"/>
    <property type="match status" value="1"/>
</dbReference>
<dbReference type="PRINTS" id="PR01976">
    <property type="entry name" value="IGFBPFAMILY"/>
</dbReference>
<dbReference type="PRINTS" id="PR01977">
    <property type="entry name" value="IGFBPFAMILY1"/>
</dbReference>
<dbReference type="SMART" id="SM00121">
    <property type="entry name" value="IB"/>
    <property type="match status" value="1"/>
</dbReference>
<dbReference type="SMART" id="SM00211">
    <property type="entry name" value="TY"/>
    <property type="match status" value="1"/>
</dbReference>
<dbReference type="SUPFAM" id="SSF57184">
    <property type="entry name" value="Growth factor receptor domain"/>
    <property type="match status" value="1"/>
</dbReference>
<dbReference type="SUPFAM" id="SSF57610">
    <property type="entry name" value="Thyroglobulin type-1 domain"/>
    <property type="match status" value="1"/>
</dbReference>
<dbReference type="PROSITE" id="PS00222">
    <property type="entry name" value="IGFBP_N_1"/>
    <property type="match status" value="1"/>
</dbReference>
<dbReference type="PROSITE" id="PS51323">
    <property type="entry name" value="IGFBP_N_2"/>
    <property type="match status" value="1"/>
</dbReference>
<dbReference type="PROSITE" id="PS00484">
    <property type="entry name" value="THYROGLOBULIN_1_1"/>
    <property type="match status" value="1"/>
</dbReference>
<dbReference type="PROSITE" id="PS51162">
    <property type="entry name" value="THYROGLOBULIN_1_2"/>
    <property type="match status" value="1"/>
</dbReference>
<protein>
    <recommendedName>
        <fullName>Insulin-like growth factor-binding protein 1</fullName>
        <shortName>IBP-1</shortName>
        <shortName>IGF-binding protein 1</shortName>
        <shortName>IGFBP-1</shortName>
    </recommendedName>
    <alternativeName>
        <fullName>Placental protein 12</fullName>
        <shortName>PP12</shortName>
    </alternativeName>
</protein>
<name>IBP1_HUMAN</name>
<proteinExistence type="evidence at protein level"/>
<gene>
    <name type="primary">IGFBP1</name>
    <name type="synonym">IBP1</name>
</gene>
<comment type="function">
    <text evidence="1 4 6 12 14">Multifunctional protein that plays a critical role in regulating the availability of IGFs such as IGF1 and IGF2 to their receptors and thereby regulates IGF-mediated cellular processes including cell migration, proliferation, differentiation or apoptosis in a cell-type specific manner (PubMed:11397844, PubMed:15972819). Also plays a positive role in cell migration by interacting with integrin ITGA5:ITGB1 through its RGD motif (PubMed:7504269). Mechanistically, binding to integrins leads to activation of focal adhesion kinase/PTK2 and stimulation of the mitogen-activated protein kinase (MAPK) pathway (PubMed:11397844). Regulates cardiomyocyte apoptosis by suppressing HIF-1alpha/HIF1A ubiquitination and subsequent degradation (By similarity).</text>
</comment>
<comment type="subunit">
    <text evidence="1 7 14 16">Binds equally well IGF1 and IGF2 (PubMed:7679979). Interacts with integrin ITGA5:ITGB1 (PubMed:7504269). Interacts with VHL; this interaction inhibits HIF1A degradation (By similarity).</text>
</comment>
<comment type="interaction">
    <interactant intactId="EBI-13646303">
        <id>P08833</id>
    </interactant>
    <interactant intactId="EBI-10988864">
        <id>P46379-2</id>
        <label>BAG6</label>
    </interactant>
    <organismsDiffer>false</organismsDiffer>
    <experiments>3</experiments>
</comment>
<comment type="interaction">
    <interactant intactId="EBI-13646303">
        <id>P08833</id>
    </interactant>
    <interactant intactId="EBI-10976677">
        <id>G5E9A7</id>
        <label>DMWD</label>
    </interactant>
    <organismsDiffer>false</organismsDiffer>
    <experiments>3</experiments>
</comment>
<comment type="interaction">
    <interactant intactId="EBI-13646303">
        <id>P08833</id>
    </interactant>
    <interactant intactId="EBI-7147442">
        <id>Q8IXL6</id>
        <label>FAM20C</label>
    </interactant>
    <organismsDiffer>false</organismsDiffer>
    <experiments>2</experiments>
</comment>
<comment type="interaction">
    <interactant intactId="EBI-13646303">
        <id>P08833</id>
    </interactant>
    <interactant intactId="EBI-7902275">
        <id>P05019</id>
        <label>IGF1</label>
    </interactant>
    <organismsDiffer>false</organismsDiffer>
    <experiments>2</experiments>
</comment>
<comment type="interaction">
    <interactant intactId="EBI-13646303">
        <id>P08833</id>
    </interactant>
    <interactant intactId="EBI-948266">
        <id>O14901</id>
        <label>KLF11</label>
    </interactant>
    <organismsDiffer>false</organismsDiffer>
    <experiments>3</experiments>
</comment>
<comment type="interaction">
    <interactant intactId="EBI-13646303">
        <id>P08833</id>
    </interactant>
    <interactant intactId="EBI-5235340">
        <id>Q7Z699</id>
        <label>SPRED1</label>
    </interactant>
    <organismsDiffer>false</organismsDiffer>
    <experiments>3</experiments>
</comment>
<comment type="subcellular location">
    <subcellularLocation>
        <location evidence="13">Secreted</location>
    </subcellularLocation>
</comment>
<comment type="PTM">
    <text evidence="6 8 15">Phosphorylated; probably by casein kinase II. Phosphorylation alters the affinity of the protein for IGFs. In amniotic fluid, the unmodified protein is the most abundant form, while mono-, bi-, tri- and tetraphosphorylated forms are present in decreasing amounts. The phosphorylation state may influence the propensity to proteolysis.</text>
</comment>
<comment type="sequence caution" evidence="18">
    <conflict type="frameshift">
        <sequence resource="EMBL-CDS" id="AAA52540"/>
    </conflict>
</comment>
<reference key="1">
    <citation type="journal article" date="1988" name="EMBO J.">
        <title>Isolation and characterization of a cDNA encoding the low molecular weight insulin-like growth factor binding protein (IBP-1).</title>
        <authorList>
            <person name="Brinkman A."/>
            <person name="Groffen C."/>
            <person name="Kortleve D.J."/>
            <person name="Geurts A."/>
            <person name="Drop S.L.S."/>
        </authorList>
    </citation>
    <scope>NUCLEOTIDE SEQUENCE [MRNA]</scope>
    <source>
        <tissue>Placenta</tissue>
    </source>
</reference>
<reference key="2">
    <citation type="journal article" date="1988" name="Biochem. Biophys. Res. Commun.">
        <title>Cloning, characterization, and expression of a human insulin-like growth factor binding protein.</title>
        <authorList>
            <person name="Brewer M.T."/>
            <person name="Stetler G.L."/>
            <person name="Squires C.H."/>
            <person name="Thompson R.C."/>
            <person name="Busby W.H. Jr."/>
            <person name="Clemmons D.R."/>
        </authorList>
    </citation>
    <scope>NUCLEOTIDE SEQUENCE [MRNA]</scope>
    <source>
        <tissue>Decidua</tissue>
    </source>
</reference>
<reference key="3">
    <citation type="journal article" date="1988" name="Nucleic Acids Res.">
        <title>Cloning of cDNA encoding human placental protein 12 (PP12): binding protein for IGF I and somatomedin.</title>
        <authorList>
            <person name="Grundmann U."/>
            <person name="Nerlich C."/>
            <person name="Bohn H."/>
            <person name="Rein T."/>
        </authorList>
    </citation>
    <scope>NUCLEOTIDE SEQUENCE [MRNA]</scope>
    <source>
        <tissue>Placenta</tissue>
    </source>
</reference>
<reference key="4">
    <citation type="journal article" date="1988" name="FEBS Lett.">
        <title>Primary structure of human insulin-like growth factor-binding protein/placental protein 12 and tissue-specific expression of its mRNA.</title>
        <authorList>
            <person name="Julkunen M."/>
            <person name="Koistinen R."/>
            <person name="Aalto-Setala K."/>
            <person name="Seppala M."/>
            <person name="Janne O.A."/>
            <person name="Kontula K."/>
        </authorList>
    </citation>
    <scope>NUCLEOTIDE SEQUENCE [MRNA]</scope>
    <source>
        <tissue>Decidua</tissue>
    </source>
</reference>
<reference key="5">
    <citation type="journal article" date="1988" name="Mol. Endocrinol.">
        <title>Insulin-like growth factor (IGF) binding protein complementary deoxyribonucleic acid from human HEP G2 hepatoma cells: predicted protein sequence suggests an IGF binding domain different from those of the IGF-I and IGF-II receptors.</title>
        <authorList>
            <person name="Lee Y.-L."/>
            <person name="Hintz R.L."/>
            <person name="James P.M."/>
            <person name="Lee P.D.K."/>
            <person name="Shively J.E."/>
            <person name="Powell D.R."/>
        </authorList>
    </citation>
    <scope>NUCLEOTIDE SEQUENCE [MRNA]</scope>
</reference>
<reference key="6">
    <citation type="journal article" date="1989" name="Mol. Endocrinol.">
        <title>Structure of the human chromosomal gene for the 25 kilodalton insulin-like growth factor binding protein.</title>
        <authorList>
            <person name="Cubbage M.L."/>
            <person name="Suwanichkul A."/>
            <person name="Powell D.R."/>
        </authorList>
    </citation>
    <scope>NUCLEOTIDE SEQUENCE [GENOMIC DNA]</scope>
</reference>
<reference key="7">
    <citation type="journal article" date="1988" name="Biochem. Biophys. Res. Commun.">
        <title>Organization of the gene encoding the insulin-like growth factor binding protein IBP-1.</title>
        <authorList>
            <person name="Brinkman A."/>
            <person name="Groffen C.A."/>
            <person name="Kortleve D.J."/>
            <person name="Drop S.L."/>
        </authorList>
    </citation>
    <scope>NUCLEOTIDE SEQUENCE [GENOMIC DNA]</scope>
</reference>
<reference key="8">
    <citation type="journal article" date="1992" name="Genomics">
        <title>Contiguous localization of the genes encoding human insulin-like growth factor binding proteins 1 (IGBP1) and 3 (IGBP3) on chromosome 7.</title>
        <authorList>
            <person name="Ehrenborg E."/>
            <person name="Larsson C."/>
            <person name="Stern I."/>
            <person name="Janson M."/>
            <person name="Powell D.R."/>
            <person name="Luthman H."/>
        </authorList>
    </citation>
    <scope>NUCLEOTIDE SEQUENCE [GENOMIC DNA]</scope>
    <source>
        <tissue>Liver</tissue>
    </source>
</reference>
<reference key="9">
    <citation type="submission" date="2004-10" db="EMBL/GenBank/DDBJ databases">
        <title>Cloning of human full-length CDSs in BD Creator(TM) system donor vector.</title>
        <authorList>
            <person name="Kalnine N."/>
            <person name="Chen X."/>
            <person name="Rolfs A."/>
            <person name="Halleck A."/>
            <person name="Hines L."/>
            <person name="Eisenstein S."/>
            <person name="Koundinya M."/>
            <person name="Raphael J."/>
            <person name="Moreira D."/>
            <person name="Kelley T."/>
            <person name="LaBaer J."/>
            <person name="Lin Y."/>
            <person name="Phelan M."/>
            <person name="Farmer A."/>
        </authorList>
    </citation>
    <scope>NUCLEOTIDE SEQUENCE [LARGE SCALE MRNA]</scope>
</reference>
<reference key="10">
    <citation type="submission" date="2003-10" db="EMBL/GenBank/DDBJ databases">
        <authorList>
            <consortium name="NIEHS SNPs program"/>
        </authorList>
    </citation>
    <scope>NUCLEOTIDE SEQUENCE [GENOMIC DNA]</scope>
    <scope>VARIANTS ILE-183 AND MET-253</scope>
</reference>
<reference key="11">
    <citation type="journal article" date="2003" name="Science">
        <title>Human chromosome 7: DNA sequence and biology.</title>
        <authorList>
            <person name="Scherer S.W."/>
            <person name="Cheung J."/>
            <person name="MacDonald J.R."/>
            <person name="Osborne L.R."/>
            <person name="Nakabayashi K."/>
            <person name="Herbrick J.-A."/>
            <person name="Carson A.R."/>
            <person name="Parker-Katiraee L."/>
            <person name="Skaug J."/>
            <person name="Khaja R."/>
            <person name="Zhang J."/>
            <person name="Hudek A.K."/>
            <person name="Li M."/>
            <person name="Haddad M."/>
            <person name="Duggan G.E."/>
            <person name="Fernandez B.A."/>
            <person name="Kanematsu E."/>
            <person name="Gentles S."/>
            <person name="Christopoulos C.C."/>
            <person name="Choufani S."/>
            <person name="Kwasnicka D."/>
            <person name="Zheng X.H."/>
            <person name="Lai Z."/>
            <person name="Nusskern D.R."/>
            <person name="Zhang Q."/>
            <person name="Gu Z."/>
            <person name="Lu F."/>
            <person name="Zeesman S."/>
            <person name="Nowaczyk M.J."/>
            <person name="Teshima I."/>
            <person name="Chitayat D."/>
            <person name="Shuman C."/>
            <person name="Weksberg R."/>
            <person name="Zackai E.H."/>
            <person name="Grebe T.A."/>
            <person name="Cox S.R."/>
            <person name="Kirkpatrick S.J."/>
            <person name="Rahman N."/>
            <person name="Friedman J.M."/>
            <person name="Heng H.H.Q."/>
            <person name="Pelicci P.G."/>
            <person name="Lo-Coco F."/>
            <person name="Belloni E."/>
            <person name="Shaffer L.G."/>
            <person name="Pober B."/>
            <person name="Morton C.C."/>
            <person name="Gusella J.F."/>
            <person name="Bruns G.A.P."/>
            <person name="Korf B.R."/>
            <person name="Quade B.J."/>
            <person name="Ligon A.H."/>
            <person name="Ferguson H."/>
            <person name="Higgins A.W."/>
            <person name="Leach N.T."/>
            <person name="Herrick S.R."/>
            <person name="Lemyre E."/>
            <person name="Farra C.G."/>
            <person name="Kim H.-G."/>
            <person name="Summers A.M."/>
            <person name="Gripp K.W."/>
            <person name="Roberts W."/>
            <person name="Szatmari P."/>
            <person name="Winsor E.J.T."/>
            <person name="Grzeschik K.-H."/>
            <person name="Teebi A."/>
            <person name="Minassian B.A."/>
            <person name="Kere J."/>
            <person name="Armengol L."/>
            <person name="Pujana M.A."/>
            <person name="Estivill X."/>
            <person name="Wilson M.D."/>
            <person name="Koop B.F."/>
            <person name="Tosi S."/>
            <person name="Moore G.E."/>
            <person name="Boright A.P."/>
            <person name="Zlotorynski E."/>
            <person name="Kerem B."/>
            <person name="Kroisel P.M."/>
            <person name="Petek E."/>
            <person name="Oscier D.G."/>
            <person name="Mould S.J."/>
            <person name="Doehner H."/>
            <person name="Doehner K."/>
            <person name="Rommens J.M."/>
            <person name="Vincent J.B."/>
            <person name="Venter J.C."/>
            <person name="Li P.W."/>
            <person name="Mural R.J."/>
            <person name="Adams M.D."/>
            <person name="Tsui L.-C."/>
        </authorList>
    </citation>
    <scope>NUCLEOTIDE SEQUENCE [LARGE SCALE GENOMIC DNA]</scope>
</reference>
<reference key="12">
    <citation type="submission" date="2005-09" db="EMBL/GenBank/DDBJ databases">
        <authorList>
            <person name="Mural R.J."/>
            <person name="Istrail S."/>
            <person name="Sutton G.G."/>
            <person name="Florea L."/>
            <person name="Halpern A.L."/>
            <person name="Mobarry C.M."/>
            <person name="Lippert R."/>
            <person name="Walenz B."/>
            <person name="Shatkay H."/>
            <person name="Dew I."/>
            <person name="Miller J.R."/>
            <person name="Flanigan M.J."/>
            <person name="Edwards N.J."/>
            <person name="Bolanos R."/>
            <person name="Fasulo D."/>
            <person name="Halldorsson B.V."/>
            <person name="Hannenhalli S."/>
            <person name="Turner R."/>
            <person name="Yooseph S."/>
            <person name="Lu F."/>
            <person name="Nusskern D.R."/>
            <person name="Shue B.C."/>
            <person name="Zheng X.H."/>
            <person name="Zhong F."/>
            <person name="Delcher A.L."/>
            <person name="Huson D.H."/>
            <person name="Kravitz S.A."/>
            <person name="Mouchard L."/>
            <person name="Reinert K."/>
            <person name="Remington K.A."/>
            <person name="Clark A.G."/>
            <person name="Waterman M.S."/>
            <person name="Eichler E.E."/>
            <person name="Adams M.D."/>
            <person name="Hunkapiller M.W."/>
            <person name="Myers E.W."/>
            <person name="Venter J.C."/>
        </authorList>
    </citation>
    <scope>NUCLEOTIDE SEQUENCE [LARGE SCALE GENOMIC DNA]</scope>
</reference>
<reference key="13">
    <citation type="journal article" date="2004" name="Genome Res.">
        <title>The status, quality, and expansion of the NIH full-length cDNA project: the Mammalian Gene Collection (MGC).</title>
        <authorList>
            <consortium name="The MGC Project Team"/>
        </authorList>
    </citation>
    <scope>NUCLEOTIDE SEQUENCE [LARGE SCALE MRNA]</scope>
    <scope>VARIANT MET-253</scope>
    <source>
        <tissue>Skin</tissue>
    </source>
</reference>
<reference key="14">
    <citation type="journal article" date="2009" name="FEBS J.">
        <title>Identification of the amniotic fluid insulin-like growth factor binding protein-1 phosphorylation sites and propensity to proteolysis of the isoforms.</title>
        <authorList>
            <person name="Dolcini L."/>
            <person name="Sala A."/>
            <person name="Campagnoli M."/>
            <person name="Labo S."/>
            <person name="Valli M."/>
            <person name="Visai L."/>
            <person name="Minchiotti L."/>
            <person name="Monaco H.L."/>
            <person name="Galliano M."/>
        </authorList>
    </citation>
    <scope>PROTEIN SEQUENCE OF 26-53; 95-152 AND 182-208</scope>
    <scope>CLEAVAGE OF INITIATOR METHIONINE</scope>
    <scope>PHOSPHORYLATION AT SER-120; SER-123; SER-126; SER-144 AND SER-194</scope>
    <scope>IDENTIFICATION BY MASS SPECTROMETRY</scope>
    <source>
        <tissue>Amniotic fluid</tissue>
    </source>
</reference>
<reference key="15">
    <citation type="journal article" date="1989" name="Eur. J. Biochem.">
        <title>Human insulin-like growth-factor-binding protein. Low-molecular-mass form: protein sequence and cDNA cloning.</title>
        <authorList>
            <person name="Luthman H."/>
            <person name="Soederling-Barros J."/>
            <person name="Persson B."/>
            <person name="Engberg C."/>
            <person name="Stern I."/>
            <person name="Lake M."/>
            <person name="Franzen S.A."/>
            <person name="Israelsson M."/>
            <person name="Raden B."/>
            <person name="Lindgren B."/>
            <person name="Hjelmqvist L."/>
            <person name="Enerbaeck S."/>
            <person name="Carlsson P."/>
            <person name="Bjursell G."/>
            <person name="Povoa G."/>
            <person name="Hall K."/>
            <person name="Joernvall H."/>
        </authorList>
    </citation>
    <scope>NUCLEOTIDE SEQUENCE [MRNA] OF 141-259</scope>
    <scope>PROTEIN SEQUENCE OF 26-259</scope>
    <source>
        <tissue>Amniotic fluid</tissue>
    </source>
</reference>
<reference key="16">
    <citation type="journal article" date="1988" name="J. Biol. Chem.">
        <title>Purification of a 31,000-dalton insulin-like growth factor binding protein from human amniotic fluid. Isolation of two forms with different biologic actions.</title>
        <authorList>
            <person name="Busby W.H. Jr."/>
            <person name="Klapper D.G."/>
            <person name="Clemmons D.R."/>
        </authorList>
    </citation>
    <scope>PROTEIN SEQUENCE OF 26-53</scope>
</reference>
<reference key="17">
    <citation type="journal article" date="1991" name="FEBS Lett.">
        <title>Site-directed mutagenesis of the N-terminal region of IGF binding protein 1; analysis of IGF binding capability.</title>
        <authorList>
            <person name="Brinkman A."/>
            <person name="Kortlrve D.J."/>
            <person name="Schuller A.G.P."/>
            <person name="Zwarthoff E.C."/>
            <person name="Drop S.L.S."/>
        </authorList>
    </citation>
    <scope>MUTAGENESIS</scope>
</reference>
<reference key="18">
    <citation type="journal article" date="1993" name="Endocrinology">
        <title>Characterization of the affinities of insulin-like growth factor (IGF)-binding proteins 1-4 for IGF-I, IGF-II, IGF-I/insulin hybrid, and IGF-I analogs.</title>
        <authorList>
            <person name="Oh Y."/>
            <person name="Mueller H.L."/>
            <person name="Lee D.Y."/>
            <person name="Fielder P.J."/>
            <person name="Rosenfeld R.G."/>
        </authorList>
    </citation>
    <scope>FUNCTION</scope>
    <scope>INTERACTION WITH IGF1 AND IGF2</scope>
</reference>
<reference key="19">
    <citation type="journal article" date="1993" name="J. Biol. Chem.">
        <title>Identification of the sites of phosphorylation in insulin-like growth factor binding protein-1. Regulation of its affinity by phosphorylation of serine 101.</title>
        <authorList>
            <person name="Jones J.I."/>
            <person name="Busby W.H. Jr."/>
            <person name="Wright G."/>
            <person name="Smith C.E."/>
            <person name="Kimack N.M."/>
            <person name="Clemmons D.R."/>
        </authorList>
    </citation>
    <scope>PHOSPHORYLATION AT SER-126; SER-144 AND SER-194</scope>
    <scope>PARTIAL PROTEIN SEQUENCE</scope>
</reference>
<reference key="20">
    <citation type="journal article" date="1993" name="Proc. Natl. Acad. Sci. U.S.A.">
        <title>Insulin-like growth factor binding protein 1 stimulates cell migration and binds to the alpha 5 beta 1 integrin by means of its Arg-Gly-Asp sequence.</title>
        <authorList>
            <person name="Jones J.I."/>
            <person name="Gockerman A."/>
            <person name="Busby W.H. Jr."/>
            <person name="Wright G."/>
            <person name="Clemmons D.R."/>
        </authorList>
    </citation>
    <scope>FUNCTION</scope>
    <scope>INTERACTION WITH ITGA5 AND ITGB1</scope>
    <scope>MUTAGENESIS OF ARG-246</scope>
</reference>
<reference key="21">
    <citation type="journal article" date="1999" name="J. Biol. Chem.">
        <title>The N-terminal disulfide linkages of human insulin-like growth factor-binding protein-6 (hIGFBP-6) and hIGFBP-1 are different as determined by mass spectrometry.</title>
        <authorList>
            <person name="Neumann G.M."/>
            <person name="Bach L.A."/>
        </authorList>
    </citation>
    <scope>DISULFIDE BONDS</scope>
</reference>
<reference key="22">
    <citation type="journal article" date="2001" name="J. Clin. Endocrinol. Metab.">
        <title>Insulin-like growth factor-binding protein 1 stimulates human trophoblast migration by signaling through alpha 5 beta 1 integrin via mitogen-activated protein Kinase pathway.</title>
        <authorList>
            <person name="Gleeson L.M."/>
            <person name="Chakraborty C."/>
            <person name="McKinnon T."/>
            <person name="Lala P.K."/>
        </authorList>
    </citation>
    <scope>FUNCTION</scope>
</reference>
<reference key="23">
    <citation type="journal article" date="2012" name="Oncogene">
        <title>Insulin-like growth factor-binding protein-1 (IGFBP-1) regulates human schwannoma proliferation, adhesion and survival.</title>
        <authorList>
            <person name="Ammoun S."/>
            <person name="Schmid M.C."/>
            <person name="Zhou L."/>
            <person name="Ristic N."/>
            <person name="Ercolano E."/>
            <person name="Hilton D.A."/>
            <person name="Perks C.M."/>
            <person name="Hanemann C.O."/>
        </authorList>
    </citation>
    <scope>FUNCTION</scope>
</reference>
<reference key="24">
    <citation type="journal article" date="2014" name="J. Proteomics">
        <title>An enzyme assisted RP-RPLC approach for in-depth analysis of human liver phosphoproteome.</title>
        <authorList>
            <person name="Bian Y."/>
            <person name="Song C."/>
            <person name="Cheng K."/>
            <person name="Dong M."/>
            <person name="Wang F."/>
            <person name="Huang J."/>
            <person name="Sun D."/>
            <person name="Wang L."/>
            <person name="Ye M."/>
            <person name="Zou H."/>
        </authorList>
    </citation>
    <scope>PHOSPHORYLATION [LARGE SCALE ANALYSIS] AT SER-144</scope>
    <scope>IDENTIFICATION BY MASS SPECTROMETRY [LARGE SCALE ANALYSIS]</scope>
    <source>
        <tissue>Liver</tissue>
    </source>
</reference>
<reference key="25">
    <citation type="journal article" date="2015" name="Cell">
        <title>A single kinase generates the majority of the secreted phosphoproteome.</title>
        <authorList>
            <person name="Tagliabracci V.S."/>
            <person name="Wiley S.E."/>
            <person name="Guo X."/>
            <person name="Kinch L.N."/>
            <person name="Durrant E."/>
            <person name="Wen J."/>
            <person name="Xiao J."/>
            <person name="Cui J."/>
            <person name="Nguyen K.B."/>
            <person name="Engel J.L."/>
            <person name="Coon J.J."/>
            <person name="Grishin N."/>
            <person name="Pinna L.A."/>
            <person name="Pagliarini D.J."/>
            <person name="Dixon J.E."/>
        </authorList>
    </citation>
    <scope>PHOSPHORYLATION AT SER-45; SER-156; THR-157; TYR-158; THR-193; SER-194; SER-199 AND SER-242</scope>
</reference>
<reference key="26">
    <citation type="journal article" date="2024" name="Sci. Rep.">
        <title>Serum IGFBP-1 as a promising diagnostic and prognostic biomarker for colorectal cancer.</title>
        <authorList>
            <person name="Huang B.L."/>
            <person name="Wei L.F."/>
            <person name="Lin Y.W."/>
            <person name="Huang L.S."/>
            <person name="Qu Q.Q."/>
            <person name="Li X.H."/>
            <person name="Chu L.Y."/>
            <person name="Xu Y.W."/>
            <person name="Wang W.D."/>
            <person name="Peng Y.H."/>
            <person name="Wu F.C."/>
        </authorList>
    </citation>
    <scope>SUBCELLULAR LOCATION</scope>
</reference>
<reference key="27">
    <citation type="journal article" date="2005" name="J. Biol. Chem.">
        <title>Structure and properties of the C-terminal domain of insulin-like growth factor-binding protein-1 isolated from human amniotic fluid.</title>
        <authorList>
            <person name="Sala A."/>
            <person name="Capaldi S."/>
            <person name="Campagnoli M."/>
            <person name="Faggion B."/>
            <person name="Labo S."/>
            <person name="Perduca M."/>
            <person name="Romano A."/>
            <person name="Carrizo M.E."/>
            <person name="Valli M."/>
            <person name="Visai L."/>
            <person name="Minchiotti L."/>
            <person name="Galliano M."/>
            <person name="Monaco H.L."/>
        </authorList>
    </citation>
    <scope>X-RAY CRYSTALLOGRAPHY (1.8 ANGSTROMS) OF 172-251</scope>
    <scope>PARTIAL PROTEIN SEQUENCE</scope>
    <scope>FUNCTION</scope>
    <scope>PHOSPHORYLATION</scope>
    <scope>DISULFIDE BONDS</scope>
</reference>
<reference key="28">
    <citation type="journal article" date="2006" name="Proc. Natl. Acad. Sci. U.S.A.">
        <title>Structural basis for the inhibition of insulin-like growth factors by insulin-like growth factor-binding proteins.</title>
        <authorList>
            <person name="Sitar T."/>
            <person name="Popowicz G.M."/>
            <person name="Siwanowicz I."/>
            <person name="Huber R."/>
            <person name="Holak T.A."/>
        </authorList>
    </citation>
    <scope>X-RAY CRYSTALLOGRAPHY (2.8 ANGSTROMS) OF 166-259 IN COMPLEX WITH IGFBP4 AND IGF1</scope>
    <scope>DISULFIDE BONDS</scope>
</reference>
<organism>
    <name type="scientific">Homo sapiens</name>
    <name type="common">Human</name>
    <dbReference type="NCBI Taxonomy" id="9606"/>
    <lineage>
        <taxon>Eukaryota</taxon>
        <taxon>Metazoa</taxon>
        <taxon>Chordata</taxon>
        <taxon>Craniata</taxon>
        <taxon>Vertebrata</taxon>
        <taxon>Euteleostomi</taxon>
        <taxon>Mammalia</taxon>
        <taxon>Eutheria</taxon>
        <taxon>Euarchontoglires</taxon>
        <taxon>Primates</taxon>
        <taxon>Haplorrhini</taxon>
        <taxon>Catarrhini</taxon>
        <taxon>Hominidae</taxon>
        <taxon>Homo</taxon>
    </lineage>
</organism>